<protein>
    <recommendedName>
        <fullName evidence="2">Translation initiation factor IF-2</fullName>
    </recommendedName>
</protein>
<accession>Q57JH9</accession>
<proteinExistence type="inferred from homology"/>
<name>IF2_SALCH</name>
<feature type="chain" id="PRO_0000228239" description="Translation initiation factor IF-2">
    <location>
        <begin position="1"/>
        <end position="892"/>
    </location>
</feature>
<feature type="domain" description="tr-type G">
    <location>
        <begin position="391"/>
        <end position="560"/>
    </location>
</feature>
<feature type="region of interest" description="Disordered" evidence="3">
    <location>
        <begin position="88"/>
        <end position="304"/>
    </location>
</feature>
<feature type="region of interest" description="G1" evidence="1">
    <location>
        <begin position="400"/>
        <end position="407"/>
    </location>
</feature>
<feature type="region of interest" description="G2" evidence="1">
    <location>
        <begin position="425"/>
        <end position="429"/>
    </location>
</feature>
<feature type="region of interest" description="G3" evidence="1">
    <location>
        <begin position="446"/>
        <end position="449"/>
    </location>
</feature>
<feature type="region of interest" description="G4" evidence="1">
    <location>
        <begin position="500"/>
        <end position="503"/>
    </location>
</feature>
<feature type="region of interest" description="G5" evidence="1">
    <location>
        <begin position="536"/>
        <end position="538"/>
    </location>
</feature>
<feature type="compositionally biased region" description="Basic and acidic residues" evidence="3">
    <location>
        <begin position="93"/>
        <end position="159"/>
    </location>
</feature>
<feature type="compositionally biased region" description="Basic and acidic residues" evidence="3">
    <location>
        <begin position="166"/>
        <end position="216"/>
    </location>
</feature>
<feature type="compositionally biased region" description="Basic residues" evidence="3">
    <location>
        <begin position="254"/>
        <end position="269"/>
    </location>
</feature>
<feature type="compositionally biased region" description="Basic and acidic residues" evidence="3">
    <location>
        <begin position="270"/>
        <end position="282"/>
    </location>
</feature>
<feature type="binding site" evidence="2">
    <location>
        <begin position="400"/>
        <end position="407"/>
    </location>
    <ligand>
        <name>GTP</name>
        <dbReference type="ChEBI" id="CHEBI:37565"/>
    </ligand>
</feature>
<feature type="binding site" evidence="2">
    <location>
        <begin position="446"/>
        <end position="450"/>
    </location>
    <ligand>
        <name>GTP</name>
        <dbReference type="ChEBI" id="CHEBI:37565"/>
    </ligand>
</feature>
<feature type="binding site" evidence="2">
    <location>
        <begin position="500"/>
        <end position="503"/>
    </location>
    <ligand>
        <name>GTP</name>
        <dbReference type="ChEBI" id="CHEBI:37565"/>
    </ligand>
</feature>
<organism>
    <name type="scientific">Salmonella choleraesuis (strain SC-B67)</name>
    <dbReference type="NCBI Taxonomy" id="321314"/>
    <lineage>
        <taxon>Bacteria</taxon>
        <taxon>Pseudomonadati</taxon>
        <taxon>Pseudomonadota</taxon>
        <taxon>Gammaproteobacteria</taxon>
        <taxon>Enterobacterales</taxon>
        <taxon>Enterobacteriaceae</taxon>
        <taxon>Salmonella</taxon>
    </lineage>
</organism>
<dbReference type="EMBL" id="AE017220">
    <property type="protein sequence ID" value="AAX67133.1"/>
    <property type="molecule type" value="Genomic_DNA"/>
</dbReference>
<dbReference type="RefSeq" id="WP_001540961.1">
    <property type="nucleotide sequence ID" value="NC_006905.1"/>
</dbReference>
<dbReference type="SMR" id="Q57JH9"/>
<dbReference type="KEGG" id="sec:SCH_3227"/>
<dbReference type="HOGENOM" id="CLU_006301_6_3_6"/>
<dbReference type="Proteomes" id="UP000000538">
    <property type="component" value="Chromosome"/>
</dbReference>
<dbReference type="GO" id="GO:0005829">
    <property type="term" value="C:cytosol"/>
    <property type="evidence" value="ECO:0007669"/>
    <property type="project" value="TreeGrafter"/>
</dbReference>
<dbReference type="GO" id="GO:0005525">
    <property type="term" value="F:GTP binding"/>
    <property type="evidence" value="ECO:0007669"/>
    <property type="project" value="UniProtKB-KW"/>
</dbReference>
<dbReference type="GO" id="GO:0003924">
    <property type="term" value="F:GTPase activity"/>
    <property type="evidence" value="ECO:0007669"/>
    <property type="project" value="UniProtKB-UniRule"/>
</dbReference>
<dbReference type="GO" id="GO:0097216">
    <property type="term" value="F:guanosine tetraphosphate binding"/>
    <property type="evidence" value="ECO:0007669"/>
    <property type="project" value="UniProtKB-ARBA"/>
</dbReference>
<dbReference type="GO" id="GO:0003743">
    <property type="term" value="F:translation initiation factor activity"/>
    <property type="evidence" value="ECO:0007669"/>
    <property type="project" value="UniProtKB-UniRule"/>
</dbReference>
<dbReference type="CDD" id="cd01887">
    <property type="entry name" value="IF2_eIF5B"/>
    <property type="match status" value="1"/>
</dbReference>
<dbReference type="CDD" id="cd03702">
    <property type="entry name" value="IF2_mtIF2_II"/>
    <property type="match status" value="1"/>
</dbReference>
<dbReference type="CDD" id="cd03692">
    <property type="entry name" value="mtIF2_IVc"/>
    <property type="match status" value="1"/>
</dbReference>
<dbReference type="FunFam" id="2.40.30.10:FF:000007">
    <property type="entry name" value="Translation initiation factor IF-2"/>
    <property type="match status" value="1"/>
</dbReference>
<dbReference type="FunFam" id="2.40.30.10:FF:000008">
    <property type="entry name" value="Translation initiation factor IF-2"/>
    <property type="match status" value="1"/>
</dbReference>
<dbReference type="FunFam" id="3.30.56.50:FF:000001">
    <property type="entry name" value="Translation initiation factor IF-2"/>
    <property type="match status" value="1"/>
</dbReference>
<dbReference type="FunFam" id="3.40.50.10050:FF:000001">
    <property type="entry name" value="Translation initiation factor IF-2"/>
    <property type="match status" value="1"/>
</dbReference>
<dbReference type="FunFam" id="3.40.50.300:FF:000019">
    <property type="entry name" value="Translation initiation factor IF-2"/>
    <property type="match status" value="1"/>
</dbReference>
<dbReference type="Gene3D" id="3.40.50.300">
    <property type="entry name" value="P-loop containing nucleotide triphosphate hydrolases"/>
    <property type="match status" value="1"/>
</dbReference>
<dbReference type="Gene3D" id="3.30.56.50">
    <property type="entry name" value="Putative DNA-binding domain, N-terminal subdomain of bacterial translation initiation factor IF2"/>
    <property type="match status" value="1"/>
</dbReference>
<dbReference type="Gene3D" id="2.40.30.10">
    <property type="entry name" value="Translation factors"/>
    <property type="match status" value="2"/>
</dbReference>
<dbReference type="Gene3D" id="3.40.50.10050">
    <property type="entry name" value="Translation initiation factor IF- 2, domain 3"/>
    <property type="match status" value="1"/>
</dbReference>
<dbReference type="HAMAP" id="MF_00100_B">
    <property type="entry name" value="IF_2_B"/>
    <property type="match status" value="1"/>
</dbReference>
<dbReference type="InterPro" id="IPR009061">
    <property type="entry name" value="DNA-bd_dom_put_sf"/>
</dbReference>
<dbReference type="InterPro" id="IPR053905">
    <property type="entry name" value="EF-G-like_DII"/>
</dbReference>
<dbReference type="InterPro" id="IPR004161">
    <property type="entry name" value="EFTu-like_2"/>
</dbReference>
<dbReference type="InterPro" id="IPR013575">
    <property type="entry name" value="IF2_assoc_dom_bac"/>
</dbReference>
<dbReference type="InterPro" id="IPR044145">
    <property type="entry name" value="IF2_II"/>
</dbReference>
<dbReference type="InterPro" id="IPR006847">
    <property type="entry name" value="IF2_N"/>
</dbReference>
<dbReference type="InterPro" id="IPR027417">
    <property type="entry name" value="P-loop_NTPase"/>
</dbReference>
<dbReference type="InterPro" id="IPR005225">
    <property type="entry name" value="Small_GTP-bd"/>
</dbReference>
<dbReference type="InterPro" id="IPR000795">
    <property type="entry name" value="T_Tr_GTP-bd_dom"/>
</dbReference>
<dbReference type="InterPro" id="IPR000178">
    <property type="entry name" value="TF_IF2_bacterial-like"/>
</dbReference>
<dbReference type="InterPro" id="IPR015760">
    <property type="entry name" value="TIF_IF2"/>
</dbReference>
<dbReference type="InterPro" id="IPR023115">
    <property type="entry name" value="TIF_IF2_dom3"/>
</dbReference>
<dbReference type="InterPro" id="IPR036925">
    <property type="entry name" value="TIF_IF2_dom3_sf"/>
</dbReference>
<dbReference type="InterPro" id="IPR009000">
    <property type="entry name" value="Transl_B-barrel_sf"/>
</dbReference>
<dbReference type="NCBIfam" id="TIGR00487">
    <property type="entry name" value="IF-2"/>
    <property type="match status" value="1"/>
</dbReference>
<dbReference type="NCBIfam" id="TIGR00231">
    <property type="entry name" value="small_GTP"/>
    <property type="match status" value="1"/>
</dbReference>
<dbReference type="PANTHER" id="PTHR43381:SF5">
    <property type="entry name" value="TR-TYPE G DOMAIN-CONTAINING PROTEIN"/>
    <property type="match status" value="1"/>
</dbReference>
<dbReference type="PANTHER" id="PTHR43381">
    <property type="entry name" value="TRANSLATION INITIATION FACTOR IF-2-RELATED"/>
    <property type="match status" value="1"/>
</dbReference>
<dbReference type="Pfam" id="PF22042">
    <property type="entry name" value="EF-G_D2"/>
    <property type="match status" value="1"/>
</dbReference>
<dbReference type="Pfam" id="PF00009">
    <property type="entry name" value="GTP_EFTU"/>
    <property type="match status" value="1"/>
</dbReference>
<dbReference type="Pfam" id="PF03144">
    <property type="entry name" value="GTP_EFTU_D2"/>
    <property type="match status" value="1"/>
</dbReference>
<dbReference type="Pfam" id="PF11987">
    <property type="entry name" value="IF-2"/>
    <property type="match status" value="1"/>
</dbReference>
<dbReference type="Pfam" id="PF08364">
    <property type="entry name" value="IF2_assoc"/>
    <property type="match status" value="1"/>
</dbReference>
<dbReference type="Pfam" id="PF04760">
    <property type="entry name" value="IF2_N"/>
    <property type="match status" value="2"/>
</dbReference>
<dbReference type="SUPFAM" id="SSF52156">
    <property type="entry name" value="Initiation factor IF2/eIF5b, domain 3"/>
    <property type="match status" value="1"/>
</dbReference>
<dbReference type="SUPFAM" id="SSF52540">
    <property type="entry name" value="P-loop containing nucleoside triphosphate hydrolases"/>
    <property type="match status" value="1"/>
</dbReference>
<dbReference type="SUPFAM" id="SSF46955">
    <property type="entry name" value="Putative DNA-binding domain"/>
    <property type="match status" value="1"/>
</dbReference>
<dbReference type="SUPFAM" id="SSF50447">
    <property type="entry name" value="Translation proteins"/>
    <property type="match status" value="2"/>
</dbReference>
<dbReference type="PROSITE" id="PS51722">
    <property type="entry name" value="G_TR_2"/>
    <property type="match status" value="1"/>
</dbReference>
<dbReference type="PROSITE" id="PS01176">
    <property type="entry name" value="IF2"/>
    <property type="match status" value="1"/>
</dbReference>
<gene>
    <name evidence="2" type="primary">infB</name>
    <name type="ordered locus">SCH_3227</name>
</gene>
<sequence length="892" mass="97448">MTDVTLKALAAERQVSVDRLVQQFADAGIRKSADDSVSAQEKQTLLAHLNREAVSGPDKLTLQRKTRSTLNIPGTGGKSKSVQIEVRKKRTFVKRDPQEAERLAAEEQAQREAEEQARREAEEQAKREAQQKAEREAAEQAKREAAEKAKREAAEKDKVSNQQTDDMTKTAQAEKARRENEAAELKRKAEEEARRKLEEEARRVAEEARRMAEENKWTATPEPVEDTSDYHVTTSQHARQAEDENDREVEGGRGRGRNAKAARPAKKGKHAESKADREEARAAVRCGKGGKRKGSSLQQGFQKPAQAVNRDVVIGETITVGELANKMAVKGSQVIKAMMKLGAMATINQVIDQETAQLVAEEMGHKVILRRENELEEAVMSDRDTGAAAEPRAPVVTIMGHVDHGKTSLLDYIRSTKVASGEAGGITQHIGAYHVETDNGMITFLDTPGHAAFTSMRARGAQATDIVVLVVAADDGVMPQTIEAIQHAKAAGVPVVVAVNKIDKPEADPDRVKNELSQYGILPEEWGGESQFVHVSAKAGTGIDELLDAILLQAEVLELKAVRKGMASGAVIESFLDKGRGPVATVLVREGTLHKGDIVLCGFEYGRVRAMRNELGQEVLEAGPSIPVEILGLSGVPAAGDEVTVVRDEKKAREVALYRQGKFREVKLARQQKSKLENMFANMTEGEVHEVNIVLKADVQGSVEAISDSLLKLSTDEVKVKIIGSGVGGITETDATLAAASNAILVGFNVRADASARKVIESESLDLRYYSVIYNLIDEVKAAMSGMLSPELKQQIIGLAEVRDVFKSPKFGAIAGCMVTEGTIKRHNPIRVLRDNVVIYEGELESLRRFKDDVNEVRNGMECGIGVKNYNDVRVGDMIEVFEIIEIQRTIA</sequence>
<reference key="1">
    <citation type="journal article" date="2005" name="Nucleic Acids Res.">
        <title>The genome sequence of Salmonella enterica serovar Choleraesuis, a highly invasive and resistant zoonotic pathogen.</title>
        <authorList>
            <person name="Chiu C.-H."/>
            <person name="Tang P."/>
            <person name="Chu C."/>
            <person name="Hu S."/>
            <person name="Bao Q."/>
            <person name="Yu J."/>
            <person name="Chou Y.-Y."/>
            <person name="Wang H.-S."/>
            <person name="Lee Y.-S."/>
        </authorList>
    </citation>
    <scope>NUCLEOTIDE SEQUENCE [LARGE SCALE GENOMIC DNA]</scope>
    <source>
        <strain>SC-B67</strain>
    </source>
</reference>
<comment type="function">
    <text evidence="2">One of the essential components for the initiation of protein synthesis. Protects formylmethionyl-tRNA from spontaneous hydrolysis and promotes its binding to the 30S ribosomal subunits. Also involved in the hydrolysis of GTP during the formation of the 70S ribosomal complex.</text>
</comment>
<comment type="subcellular location">
    <subcellularLocation>
        <location evidence="2">Cytoplasm</location>
    </subcellularLocation>
</comment>
<comment type="similarity">
    <text evidence="2">Belongs to the TRAFAC class translation factor GTPase superfamily. Classic translation factor GTPase family. IF-2 subfamily.</text>
</comment>
<evidence type="ECO:0000250" key="1"/>
<evidence type="ECO:0000255" key="2">
    <source>
        <dbReference type="HAMAP-Rule" id="MF_00100"/>
    </source>
</evidence>
<evidence type="ECO:0000256" key="3">
    <source>
        <dbReference type="SAM" id="MobiDB-lite"/>
    </source>
</evidence>
<keyword id="KW-0963">Cytoplasm</keyword>
<keyword id="KW-0342">GTP-binding</keyword>
<keyword id="KW-0396">Initiation factor</keyword>
<keyword id="KW-0547">Nucleotide-binding</keyword>
<keyword id="KW-0648">Protein biosynthesis</keyword>